<gene>
    <name evidence="1" type="primary">hemF</name>
    <name type="ordered locus">ECED1_2878</name>
</gene>
<organism>
    <name type="scientific">Escherichia coli O81 (strain ED1a)</name>
    <dbReference type="NCBI Taxonomy" id="585397"/>
    <lineage>
        <taxon>Bacteria</taxon>
        <taxon>Pseudomonadati</taxon>
        <taxon>Pseudomonadota</taxon>
        <taxon>Gammaproteobacteria</taxon>
        <taxon>Enterobacterales</taxon>
        <taxon>Enterobacteriaceae</taxon>
        <taxon>Escherichia</taxon>
    </lineage>
</organism>
<name>HEM6_ECO81</name>
<evidence type="ECO:0000255" key="1">
    <source>
        <dbReference type="HAMAP-Rule" id="MF_00333"/>
    </source>
</evidence>
<sequence length="299" mass="34304">MKPDAHQVKQFLLNLQDTICQQLSAVDGAEFVEDSWQREAGGGGRSRVLRNGGVFEQAGVNFSHVHGEAMPASATAHRPELAGRSFEAMGVSLVVHPHNPYVPTSHANVRFFIAEKPGAEPVWWFGGGFDLTPFYGFEEDAIHWHRTARDLCLPFGEDVYPRYKKWCDEYFYLKHRNEQRGIGGLFFDDLNTPDFDHCFAFMQAVGKGYTDAYLPIVERRKAMAYGERERNFQLYRRGRYVEFNLVWDRGTLFGLQTGGRTESILMSMPPLVRWEYDYQPKDGSPEAALSEFIKVRDWV</sequence>
<dbReference type="EC" id="1.3.3.3" evidence="1"/>
<dbReference type="EMBL" id="CU928162">
    <property type="protein sequence ID" value="CAR09052.2"/>
    <property type="molecule type" value="Genomic_DNA"/>
</dbReference>
<dbReference type="RefSeq" id="WP_001298446.1">
    <property type="nucleotide sequence ID" value="NC_011745.1"/>
</dbReference>
<dbReference type="SMR" id="B7MY86"/>
<dbReference type="KEGG" id="ecq:ECED1_2878"/>
<dbReference type="HOGENOM" id="CLU_026169_0_1_6"/>
<dbReference type="UniPathway" id="UPA00251">
    <property type="reaction ID" value="UER00322"/>
</dbReference>
<dbReference type="Proteomes" id="UP000000748">
    <property type="component" value="Chromosome"/>
</dbReference>
<dbReference type="GO" id="GO:0005737">
    <property type="term" value="C:cytoplasm"/>
    <property type="evidence" value="ECO:0007669"/>
    <property type="project" value="UniProtKB-SubCell"/>
</dbReference>
<dbReference type="GO" id="GO:0004109">
    <property type="term" value="F:coproporphyrinogen oxidase activity"/>
    <property type="evidence" value="ECO:0007669"/>
    <property type="project" value="UniProtKB-UniRule"/>
</dbReference>
<dbReference type="GO" id="GO:0030145">
    <property type="term" value="F:manganese ion binding"/>
    <property type="evidence" value="ECO:0007669"/>
    <property type="project" value="UniProtKB-UniRule"/>
</dbReference>
<dbReference type="GO" id="GO:0042803">
    <property type="term" value="F:protein homodimerization activity"/>
    <property type="evidence" value="ECO:0000250"/>
    <property type="project" value="UniProtKB"/>
</dbReference>
<dbReference type="GO" id="GO:0006782">
    <property type="term" value="P:protoporphyrinogen IX biosynthetic process"/>
    <property type="evidence" value="ECO:0007669"/>
    <property type="project" value="UniProtKB-UniRule"/>
</dbReference>
<dbReference type="FunFam" id="3.40.1500.10:FF:000001">
    <property type="entry name" value="Oxygen-dependent coproporphyrinogen-III oxidase"/>
    <property type="match status" value="1"/>
</dbReference>
<dbReference type="Gene3D" id="3.40.1500.10">
    <property type="entry name" value="Coproporphyrinogen III oxidase, aerobic"/>
    <property type="match status" value="1"/>
</dbReference>
<dbReference type="HAMAP" id="MF_00333">
    <property type="entry name" value="Coprogen_oxidas"/>
    <property type="match status" value="1"/>
</dbReference>
<dbReference type="InterPro" id="IPR001260">
    <property type="entry name" value="Coprogen_oxidase_aer"/>
</dbReference>
<dbReference type="InterPro" id="IPR036406">
    <property type="entry name" value="Coprogen_oxidase_aer_sf"/>
</dbReference>
<dbReference type="InterPro" id="IPR018375">
    <property type="entry name" value="Coprogen_oxidase_CS"/>
</dbReference>
<dbReference type="NCBIfam" id="NF003727">
    <property type="entry name" value="PRK05330.1"/>
    <property type="match status" value="1"/>
</dbReference>
<dbReference type="PANTHER" id="PTHR10755">
    <property type="entry name" value="COPROPORPHYRINOGEN III OXIDASE, MITOCHONDRIAL"/>
    <property type="match status" value="1"/>
</dbReference>
<dbReference type="PANTHER" id="PTHR10755:SF0">
    <property type="entry name" value="OXYGEN-DEPENDENT COPROPORPHYRINOGEN-III OXIDASE, MITOCHONDRIAL"/>
    <property type="match status" value="1"/>
</dbReference>
<dbReference type="Pfam" id="PF01218">
    <property type="entry name" value="Coprogen_oxidas"/>
    <property type="match status" value="1"/>
</dbReference>
<dbReference type="PIRSF" id="PIRSF000166">
    <property type="entry name" value="Coproporphyri_ox"/>
    <property type="match status" value="1"/>
</dbReference>
<dbReference type="PRINTS" id="PR00073">
    <property type="entry name" value="COPRGNOXDASE"/>
</dbReference>
<dbReference type="SUPFAM" id="SSF102886">
    <property type="entry name" value="Coproporphyrinogen III oxidase"/>
    <property type="match status" value="1"/>
</dbReference>
<dbReference type="PROSITE" id="PS01021">
    <property type="entry name" value="COPROGEN_OXIDASE"/>
    <property type="match status" value="1"/>
</dbReference>
<proteinExistence type="inferred from homology"/>
<reference key="1">
    <citation type="journal article" date="2009" name="PLoS Genet.">
        <title>Organised genome dynamics in the Escherichia coli species results in highly diverse adaptive paths.</title>
        <authorList>
            <person name="Touchon M."/>
            <person name="Hoede C."/>
            <person name="Tenaillon O."/>
            <person name="Barbe V."/>
            <person name="Baeriswyl S."/>
            <person name="Bidet P."/>
            <person name="Bingen E."/>
            <person name="Bonacorsi S."/>
            <person name="Bouchier C."/>
            <person name="Bouvet O."/>
            <person name="Calteau A."/>
            <person name="Chiapello H."/>
            <person name="Clermont O."/>
            <person name="Cruveiller S."/>
            <person name="Danchin A."/>
            <person name="Diard M."/>
            <person name="Dossat C."/>
            <person name="Karoui M.E."/>
            <person name="Frapy E."/>
            <person name="Garry L."/>
            <person name="Ghigo J.M."/>
            <person name="Gilles A.M."/>
            <person name="Johnson J."/>
            <person name="Le Bouguenec C."/>
            <person name="Lescat M."/>
            <person name="Mangenot S."/>
            <person name="Martinez-Jehanne V."/>
            <person name="Matic I."/>
            <person name="Nassif X."/>
            <person name="Oztas S."/>
            <person name="Petit M.A."/>
            <person name="Pichon C."/>
            <person name="Rouy Z."/>
            <person name="Ruf C.S."/>
            <person name="Schneider D."/>
            <person name="Tourret J."/>
            <person name="Vacherie B."/>
            <person name="Vallenet D."/>
            <person name="Medigue C."/>
            <person name="Rocha E.P.C."/>
            <person name="Denamur E."/>
        </authorList>
    </citation>
    <scope>NUCLEOTIDE SEQUENCE [LARGE SCALE GENOMIC DNA]</scope>
    <source>
        <strain>ED1a</strain>
    </source>
</reference>
<comment type="function">
    <text evidence="1">Involved in the heme biosynthesis. Catalyzes the aerobic oxidative decarboxylation of propionate groups of rings A and B of coproporphyrinogen-III to yield the vinyl groups in protoporphyrinogen-IX.</text>
</comment>
<comment type="catalytic activity">
    <reaction evidence="1">
        <text>coproporphyrinogen III + O2 + 2 H(+) = protoporphyrinogen IX + 2 CO2 + 2 H2O</text>
        <dbReference type="Rhea" id="RHEA:18257"/>
        <dbReference type="ChEBI" id="CHEBI:15377"/>
        <dbReference type="ChEBI" id="CHEBI:15378"/>
        <dbReference type="ChEBI" id="CHEBI:15379"/>
        <dbReference type="ChEBI" id="CHEBI:16526"/>
        <dbReference type="ChEBI" id="CHEBI:57307"/>
        <dbReference type="ChEBI" id="CHEBI:57309"/>
        <dbReference type="EC" id="1.3.3.3"/>
    </reaction>
</comment>
<comment type="cofactor">
    <cofactor evidence="1">
        <name>Mn(2+)</name>
        <dbReference type="ChEBI" id="CHEBI:29035"/>
    </cofactor>
</comment>
<comment type="pathway">
    <text evidence="1">Porphyrin-containing compound metabolism; protoporphyrin-IX biosynthesis; protoporphyrinogen-IX from coproporphyrinogen-III (O2 route): step 1/1.</text>
</comment>
<comment type="subunit">
    <text evidence="1">Homodimer.</text>
</comment>
<comment type="subcellular location">
    <subcellularLocation>
        <location evidence="1">Cytoplasm</location>
    </subcellularLocation>
</comment>
<comment type="similarity">
    <text evidence="1">Belongs to the aerobic coproporphyrinogen-III oxidase family.</text>
</comment>
<accession>B7MY86</accession>
<protein>
    <recommendedName>
        <fullName evidence="1">Oxygen-dependent coproporphyrinogen-III oxidase</fullName>
        <shortName evidence="1">CPO</shortName>
        <shortName evidence="1">Coprogen oxidase</shortName>
        <shortName evidence="1">Coproporphyrinogenase</shortName>
        <ecNumber evidence="1">1.3.3.3</ecNumber>
    </recommendedName>
</protein>
<feature type="chain" id="PRO_1000133179" description="Oxygen-dependent coproporphyrinogen-III oxidase">
    <location>
        <begin position="1"/>
        <end position="299"/>
    </location>
</feature>
<feature type="region of interest" description="Important for dimerization" evidence="1">
    <location>
        <begin position="240"/>
        <end position="275"/>
    </location>
</feature>
<feature type="active site" description="Proton donor" evidence="1">
    <location>
        <position position="106"/>
    </location>
</feature>
<feature type="binding site" evidence="1">
    <location>
        <position position="92"/>
    </location>
    <ligand>
        <name>substrate</name>
    </ligand>
</feature>
<feature type="binding site" evidence="1">
    <location>
        <position position="96"/>
    </location>
    <ligand>
        <name>Mn(2+)</name>
        <dbReference type="ChEBI" id="CHEBI:29035"/>
    </ligand>
</feature>
<feature type="binding site" evidence="1">
    <location>
        <position position="106"/>
    </location>
    <ligand>
        <name>Mn(2+)</name>
        <dbReference type="ChEBI" id="CHEBI:29035"/>
    </ligand>
</feature>
<feature type="binding site" evidence="1">
    <location>
        <begin position="108"/>
        <end position="110"/>
    </location>
    <ligand>
        <name>substrate</name>
    </ligand>
</feature>
<feature type="binding site" evidence="1">
    <location>
        <position position="145"/>
    </location>
    <ligand>
        <name>Mn(2+)</name>
        <dbReference type="ChEBI" id="CHEBI:29035"/>
    </ligand>
</feature>
<feature type="binding site" evidence="1">
    <location>
        <position position="175"/>
    </location>
    <ligand>
        <name>Mn(2+)</name>
        <dbReference type="ChEBI" id="CHEBI:29035"/>
    </ligand>
</feature>
<feature type="binding site" evidence="1">
    <location>
        <begin position="258"/>
        <end position="260"/>
    </location>
    <ligand>
        <name>substrate</name>
    </ligand>
</feature>
<feature type="site" description="Important for dimerization" evidence="1">
    <location>
        <position position="175"/>
    </location>
</feature>
<keyword id="KW-0963">Cytoplasm</keyword>
<keyword id="KW-0350">Heme biosynthesis</keyword>
<keyword id="KW-0464">Manganese</keyword>
<keyword id="KW-0479">Metal-binding</keyword>
<keyword id="KW-0560">Oxidoreductase</keyword>
<keyword id="KW-0627">Porphyrin biosynthesis</keyword>